<dbReference type="EC" id="3.6.5.4" evidence="1 2"/>
<dbReference type="EMBL" id="D14356">
    <property type="protein sequence ID" value="BAA21691.1"/>
    <property type="molecule type" value="Genomic_DNA"/>
</dbReference>
<dbReference type="EMBL" id="AL009126">
    <property type="protein sequence ID" value="CAB13471.1"/>
    <property type="molecule type" value="Genomic_DNA"/>
</dbReference>
<dbReference type="PIR" id="B47154">
    <property type="entry name" value="B47154"/>
</dbReference>
<dbReference type="RefSeq" id="NP_389480.1">
    <property type="nucleotide sequence ID" value="NC_000964.3"/>
</dbReference>
<dbReference type="RefSeq" id="WP_003232020.1">
    <property type="nucleotide sequence ID" value="NZ_OZ025638.1"/>
</dbReference>
<dbReference type="PDB" id="4UE4">
    <property type="method" value="EM"/>
    <property type="resolution" value="7.00 A"/>
    <property type="chains" value="C=330-431"/>
</dbReference>
<dbReference type="PDB" id="7O5B">
    <property type="method" value="EM"/>
    <property type="resolution" value="3.33 A"/>
    <property type="chains" value="g=3-446"/>
</dbReference>
<dbReference type="PDB" id="7O9F">
    <property type="method" value="X-ray"/>
    <property type="resolution" value="2.51 A"/>
    <property type="chains" value="A/B/C=3-300"/>
</dbReference>
<dbReference type="PDBsum" id="4UE4"/>
<dbReference type="PDBsum" id="7O5B"/>
<dbReference type="PDBsum" id="7O9F"/>
<dbReference type="EMDB" id="EMD-12734"/>
<dbReference type="EMDB" id="EMD-2843"/>
<dbReference type="SMR" id="P37105"/>
<dbReference type="FunCoup" id="P37105">
    <property type="interactions" value="789"/>
</dbReference>
<dbReference type="IntAct" id="P37105">
    <property type="interactions" value="1"/>
</dbReference>
<dbReference type="MINT" id="P37105"/>
<dbReference type="STRING" id="224308.BSU15980"/>
<dbReference type="jPOST" id="P37105"/>
<dbReference type="PaxDb" id="224308-BSU15980"/>
<dbReference type="EnsemblBacteria" id="CAB13471">
    <property type="protein sequence ID" value="CAB13471"/>
    <property type="gene ID" value="BSU_15980"/>
</dbReference>
<dbReference type="GeneID" id="937104"/>
<dbReference type="KEGG" id="bsu:BSU15980"/>
<dbReference type="PATRIC" id="fig|224308.179.peg.1738"/>
<dbReference type="eggNOG" id="COG0541">
    <property type="taxonomic scope" value="Bacteria"/>
</dbReference>
<dbReference type="InParanoid" id="P37105"/>
<dbReference type="OrthoDB" id="9804720at2"/>
<dbReference type="PhylomeDB" id="P37105"/>
<dbReference type="BioCyc" id="BSUB:BSU15980-MONOMER"/>
<dbReference type="EvolutionaryTrace" id="P37105"/>
<dbReference type="Proteomes" id="UP000001570">
    <property type="component" value="Chromosome"/>
</dbReference>
<dbReference type="GO" id="GO:0048500">
    <property type="term" value="C:signal recognition particle"/>
    <property type="evidence" value="ECO:0007669"/>
    <property type="project" value="UniProtKB-UniRule"/>
</dbReference>
<dbReference type="GO" id="GO:0008312">
    <property type="term" value="F:7S RNA binding"/>
    <property type="evidence" value="ECO:0007669"/>
    <property type="project" value="InterPro"/>
</dbReference>
<dbReference type="GO" id="GO:0016887">
    <property type="term" value="F:ATP hydrolysis activity"/>
    <property type="evidence" value="ECO:0007669"/>
    <property type="project" value="InterPro"/>
</dbReference>
<dbReference type="GO" id="GO:0005525">
    <property type="term" value="F:GTP binding"/>
    <property type="evidence" value="ECO:0007669"/>
    <property type="project" value="UniProtKB-UniRule"/>
</dbReference>
<dbReference type="GO" id="GO:0003924">
    <property type="term" value="F:GTPase activity"/>
    <property type="evidence" value="ECO:0007669"/>
    <property type="project" value="UniProtKB-UniRule"/>
</dbReference>
<dbReference type="GO" id="GO:0006614">
    <property type="term" value="P:SRP-dependent cotranslational protein targeting to membrane"/>
    <property type="evidence" value="ECO:0007669"/>
    <property type="project" value="InterPro"/>
</dbReference>
<dbReference type="CDD" id="cd18539">
    <property type="entry name" value="SRP_G"/>
    <property type="match status" value="1"/>
</dbReference>
<dbReference type="FunFam" id="3.40.50.300:FF:000022">
    <property type="entry name" value="Signal recognition particle 54 kDa subunit"/>
    <property type="match status" value="1"/>
</dbReference>
<dbReference type="FunFam" id="1.20.120.140:FF:000001">
    <property type="entry name" value="Signal recognition particle GTPase"/>
    <property type="match status" value="1"/>
</dbReference>
<dbReference type="Gene3D" id="3.40.50.300">
    <property type="entry name" value="P-loop containing nucleotide triphosphate hydrolases"/>
    <property type="match status" value="1"/>
</dbReference>
<dbReference type="Gene3D" id="1.20.120.140">
    <property type="entry name" value="Signal recognition particle SRP54, nucleotide-binding domain"/>
    <property type="match status" value="1"/>
</dbReference>
<dbReference type="Gene3D" id="1.10.260.30">
    <property type="entry name" value="Signal recognition particle, SRP54 subunit, M-domain"/>
    <property type="match status" value="1"/>
</dbReference>
<dbReference type="HAMAP" id="MF_00306">
    <property type="entry name" value="SRP54"/>
    <property type="match status" value="1"/>
</dbReference>
<dbReference type="InterPro" id="IPR003593">
    <property type="entry name" value="AAA+_ATPase"/>
</dbReference>
<dbReference type="InterPro" id="IPR027417">
    <property type="entry name" value="P-loop_NTPase"/>
</dbReference>
<dbReference type="InterPro" id="IPR036891">
    <property type="entry name" value="Signal_recog_part_SRP54_M_sf"/>
</dbReference>
<dbReference type="InterPro" id="IPR013822">
    <property type="entry name" value="Signal_recog_particl_SRP54_hlx"/>
</dbReference>
<dbReference type="InterPro" id="IPR004125">
    <property type="entry name" value="Signal_recog_particle_SRP54_M"/>
</dbReference>
<dbReference type="InterPro" id="IPR004780">
    <property type="entry name" value="SRP"/>
</dbReference>
<dbReference type="InterPro" id="IPR022941">
    <property type="entry name" value="SRP54"/>
</dbReference>
<dbReference type="InterPro" id="IPR000897">
    <property type="entry name" value="SRP54_GTPase_dom"/>
</dbReference>
<dbReference type="InterPro" id="IPR042101">
    <property type="entry name" value="SRP54_N_sf"/>
</dbReference>
<dbReference type="NCBIfam" id="TIGR00959">
    <property type="entry name" value="ffh"/>
    <property type="match status" value="1"/>
</dbReference>
<dbReference type="PANTHER" id="PTHR11564">
    <property type="entry name" value="SIGNAL RECOGNITION PARTICLE 54K PROTEIN SRP54"/>
    <property type="match status" value="1"/>
</dbReference>
<dbReference type="PANTHER" id="PTHR11564:SF5">
    <property type="entry name" value="SIGNAL RECOGNITION PARTICLE SUBUNIT SRP54"/>
    <property type="match status" value="1"/>
</dbReference>
<dbReference type="Pfam" id="PF00448">
    <property type="entry name" value="SRP54"/>
    <property type="match status" value="1"/>
</dbReference>
<dbReference type="Pfam" id="PF02881">
    <property type="entry name" value="SRP54_N"/>
    <property type="match status" value="1"/>
</dbReference>
<dbReference type="Pfam" id="PF02978">
    <property type="entry name" value="SRP_SPB"/>
    <property type="match status" value="1"/>
</dbReference>
<dbReference type="SMART" id="SM00382">
    <property type="entry name" value="AAA"/>
    <property type="match status" value="1"/>
</dbReference>
<dbReference type="SMART" id="SM00962">
    <property type="entry name" value="SRP54"/>
    <property type="match status" value="1"/>
</dbReference>
<dbReference type="SMART" id="SM00963">
    <property type="entry name" value="SRP54_N"/>
    <property type="match status" value="1"/>
</dbReference>
<dbReference type="SUPFAM" id="SSF52540">
    <property type="entry name" value="P-loop containing nucleoside triphosphate hydrolases"/>
    <property type="match status" value="1"/>
</dbReference>
<dbReference type="SUPFAM" id="SSF47446">
    <property type="entry name" value="Signal peptide-binding domain"/>
    <property type="match status" value="1"/>
</dbReference>
<dbReference type="PROSITE" id="PS00300">
    <property type="entry name" value="SRP54"/>
    <property type="match status" value="1"/>
</dbReference>
<name>SRP54_BACSU</name>
<protein>
    <recommendedName>
        <fullName evidence="1">Signal recognition particle protein</fullName>
        <ecNumber evidence="1 2">3.6.5.4</ecNumber>
    </recommendedName>
    <alternativeName>
        <fullName evidence="1">Fifty-four homolog</fullName>
    </alternativeName>
</protein>
<accession>P37105</accession>
<feature type="chain" id="PRO_0000101149" description="Signal recognition particle protein">
    <location>
        <begin position="1"/>
        <end position="446"/>
    </location>
</feature>
<feature type="binding site" evidence="1">
    <location>
        <begin position="108"/>
        <end position="115"/>
    </location>
    <ligand>
        <name>GTP</name>
        <dbReference type="ChEBI" id="CHEBI:37565"/>
    </ligand>
</feature>
<feature type="binding site" evidence="1">
    <location>
        <begin position="191"/>
        <end position="195"/>
    </location>
    <ligand>
        <name>GTP</name>
        <dbReference type="ChEBI" id="CHEBI:37565"/>
    </ligand>
</feature>
<feature type="binding site" evidence="1">
    <location>
        <begin position="249"/>
        <end position="252"/>
    </location>
    <ligand>
        <name>GTP</name>
        <dbReference type="ChEBI" id="CHEBI:37565"/>
    </ligand>
</feature>
<feature type="helix" evidence="4">
    <location>
        <begin position="4"/>
        <end position="19"/>
    </location>
</feature>
<feature type="helix" evidence="4">
    <location>
        <begin position="25"/>
        <end position="41"/>
    </location>
</feature>
<feature type="helix" evidence="4">
    <location>
        <begin position="46"/>
        <end position="60"/>
    </location>
</feature>
<feature type="helix" evidence="4">
    <location>
        <begin position="63"/>
        <end position="66"/>
    </location>
</feature>
<feature type="helix" evidence="4">
    <location>
        <begin position="71"/>
        <end position="87"/>
    </location>
</feature>
<feature type="strand" evidence="4">
    <location>
        <begin position="98"/>
        <end position="100"/>
    </location>
</feature>
<feature type="strand" evidence="4">
    <location>
        <begin position="102"/>
        <end position="107"/>
    </location>
</feature>
<feature type="helix" evidence="4">
    <location>
        <begin position="114"/>
        <end position="129"/>
    </location>
</feature>
<feature type="strand" evidence="4">
    <location>
        <begin position="133"/>
        <end position="138"/>
    </location>
</feature>
<feature type="helix" evidence="4">
    <location>
        <begin position="145"/>
        <end position="156"/>
    </location>
</feature>
<feature type="strand" evidence="4">
    <location>
        <begin position="165"/>
        <end position="167"/>
    </location>
</feature>
<feature type="helix" evidence="4">
    <location>
        <begin position="169"/>
        <end position="183"/>
    </location>
</feature>
<feature type="strand" evidence="4">
    <location>
        <begin position="186"/>
        <end position="192"/>
    </location>
</feature>
<feature type="helix" evidence="4">
    <location>
        <begin position="200"/>
        <end position="213"/>
    </location>
</feature>
<feature type="strand" evidence="4">
    <location>
        <begin position="216"/>
        <end position="223"/>
    </location>
</feature>
<feature type="helix" evidence="4">
    <location>
        <begin position="224"/>
        <end position="227"/>
    </location>
</feature>
<feature type="helix" evidence="4">
    <location>
        <begin position="228"/>
        <end position="240"/>
    </location>
</feature>
<feature type="strand" evidence="4">
    <location>
        <begin position="245"/>
        <end position="249"/>
    </location>
</feature>
<feature type="helix" evidence="4">
    <location>
        <begin position="251"/>
        <end position="253"/>
    </location>
</feature>
<feature type="helix" evidence="4">
    <location>
        <begin position="258"/>
        <end position="267"/>
    </location>
</feature>
<feature type="strand" evidence="4">
    <location>
        <begin position="271"/>
        <end position="275"/>
    </location>
</feature>
<feature type="strand" evidence="4">
    <location>
        <begin position="277"/>
        <end position="279"/>
    </location>
</feature>
<feature type="strand" evidence="4">
    <location>
        <begin position="283"/>
        <end position="285"/>
    </location>
</feature>
<feature type="helix" evidence="4">
    <location>
        <begin position="288"/>
        <end position="295"/>
    </location>
</feature>
<proteinExistence type="evidence at protein level"/>
<comment type="function">
    <text evidence="3">Involved in targeting and insertion of nascent membrane proteins into the cytoplasmic membrane. Binds to the hydrophobic signal sequence of the ribosome-nascent chain (RNC) as it emerges from the ribosomes. The SRP-RNC complex is then targeted to the cytoplasmic membrane where it interacts with the SRP receptor FtsY. Interaction with FtsY leads to the transfer of the RNC complex to the Sec translocase for insertion into the membrane, the hydrolysis of GTP by both Ffh and FtsY, and the dissociation of the SRP-FtsY complex into the individual components (Probable).</text>
</comment>
<comment type="catalytic activity">
    <reaction evidence="1 2">
        <text>GTP + H2O = GDP + phosphate + H(+)</text>
        <dbReference type="Rhea" id="RHEA:19669"/>
        <dbReference type="ChEBI" id="CHEBI:15377"/>
        <dbReference type="ChEBI" id="CHEBI:15378"/>
        <dbReference type="ChEBI" id="CHEBI:37565"/>
        <dbReference type="ChEBI" id="CHEBI:43474"/>
        <dbReference type="ChEBI" id="CHEBI:58189"/>
        <dbReference type="EC" id="3.6.5.4"/>
    </reaction>
</comment>
<comment type="subunit">
    <text evidence="1 2">Part of the signal recognition particle protein translocation system, which is composed of SRP and FtsY (By similarity). Interacts with a small cytoplasmic RNA (sc-RNA).</text>
</comment>
<comment type="subcellular location">
    <subcellularLocation>
        <location evidence="1 2">Cytoplasm</location>
    </subcellularLocation>
    <text>The SRP-RNC complex is targeted to the cytoplasmic membrane.</text>
</comment>
<comment type="domain">
    <text evidence="1">Composed of three domains: the N-terminal N domain, which is responsible for interactions with the ribosome, the central G domain, which binds GTP, and the C-terminal M domain, which binds the RNA and the signal sequence of the RNC.</text>
</comment>
<comment type="similarity">
    <text evidence="1">Belongs to the GTP-binding SRP family. SRP54 subfamily.</text>
</comment>
<keyword id="KW-0002">3D-structure</keyword>
<keyword id="KW-0963">Cytoplasm</keyword>
<keyword id="KW-0342">GTP-binding</keyword>
<keyword id="KW-0378">Hydrolase</keyword>
<keyword id="KW-0547">Nucleotide-binding</keyword>
<keyword id="KW-1185">Reference proteome</keyword>
<keyword id="KW-0687">Ribonucleoprotein</keyword>
<keyword id="KW-0694">RNA-binding</keyword>
<keyword id="KW-0733">Signal recognition particle</keyword>
<organism>
    <name type="scientific">Bacillus subtilis (strain 168)</name>
    <dbReference type="NCBI Taxonomy" id="224308"/>
    <lineage>
        <taxon>Bacteria</taxon>
        <taxon>Bacillati</taxon>
        <taxon>Bacillota</taxon>
        <taxon>Bacilli</taxon>
        <taxon>Bacillales</taxon>
        <taxon>Bacillaceae</taxon>
        <taxon>Bacillus</taxon>
    </lineage>
</organism>
<evidence type="ECO:0000255" key="1">
    <source>
        <dbReference type="HAMAP-Rule" id="MF_00306"/>
    </source>
</evidence>
<evidence type="ECO:0000269" key="2">
    <source>
    </source>
</evidence>
<evidence type="ECO:0000305" key="3">
    <source>
    </source>
</evidence>
<evidence type="ECO:0007829" key="4">
    <source>
        <dbReference type="PDB" id="7O9F"/>
    </source>
</evidence>
<reference key="1">
    <citation type="journal article" date="1993" name="J. Bacteriol.">
        <title>Cloning and characterization of a Bacillus subtilis gene encoding a homolog of the 54-kilodalton subunit of mammalian signal recognition particle and Escherichia coli Ffh.</title>
        <authorList>
            <person name="Honda K."/>
            <person name="Nakamura K."/>
            <person name="Nishiguchi M."/>
            <person name="Yamane K."/>
        </authorList>
    </citation>
    <scope>NUCLEOTIDE SEQUENCE [GENOMIC DNA]</scope>
    <source>
        <strain>168</strain>
    </source>
</reference>
<reference key="2">
    <citation type="journal article" date="1997" name="Nature">
        <title>The complete genome sequence of the Gram-positive bacterium Bacillus subtilis.</title>
        <authorList>
            <person name="Kunst F."/>
            <person name="Ogasawara N."/>
            <person name="Moszer I."/>
            <person name="Albertini A.M."/>
            <person name="Alloni G."/>
            <person name="Azevedo V."/>
            <person name="Bertero M.G."/>
            <person name="Bessieres P."/>
            <person name="Bolotin A."/>
            <person name="Borchert S."/>
            <person name="Borriss R."/>
            <person name="Boursier L."/>
            <person name="Brans A."/>
            <person name="Braun M."/>
            <person name="Brignell S.C."/>
            <person name="Bron S."/>
            <person name="Brouillet S."/>
            <person name="Bruschi C.V."/>
            <person name="Caldwell B."/>
            <person name="Capuano V."/>
            <person name="Carter N.M."/>
            <person name="Choi S.-K."/>
            <person name="Codani J.-J."/>
            <person name="Connerton I.F."/>
            <person name="Cummings N.J."/>
            <person name="Daniel R.A."/>
            <person name="Denizot F."/>
            <person name="Devine K.M."/>
            <person name="Duesterhoeft A."/>
            <person name="Ehrlich S.D."/>
            <person name="Emmerson P.T."/>
            <person name="Entian K.-D."/>
            <person name="Errington J."/>
            <person name="Fabret C."/>
            <person name="Ferrari E."/>
            <person name="Foulger D."/>
            <person name="Fritz C."/>
            <person name="Fujita M."/>
            <person name="Fujita Y."/>
            <person name="Fuma S."/>
            <person name="Galizzi A."/>
            <person name="Galleron N."/>
            <person name="Ghim S.-Y."/>
            <person name="Glaser P."/>
            <person name="Goffeau A."/>
            <person name="Golightly E.J."/>
            <person name="Grandi G."/>
            <person name="Guiseppi G."/>
            <person name="Guy B.J."/>
            <person name="Haga K."/>
            <person name="Haiech J."/>
            <person name="Harwood C.R."/>
            <person name="Henaut A."/>
            <person name="Hilbert H."/>
            <person name="Holsappel S."/>
            <person name="Hosono S."/>
            <person name="Hullo M.-F."/>
            <person name="Itaya M."/>
            <person name="Jones L.-M."/>
            <person name="Joris B."/>
            <person name="Karamata D."/>
            <person name="Kasahara Y."/>
            <person name="Klaerr-Blanchard M."/>
            <person name="Klein C."/>
            <person name="Kobayashi Y."/>
            <person name="Koetter P."/>
            <person name="Koningstein G."/>
            <person name="Krogh S."/>
            <person name="Kumano M."/>
            <person name="Kurita K."/>
            <person name="Lapidus A."/>
            <person name="Lardinois S."/>
            <person name="Lauber J."/>
            <person name="Lazarevic V."/>
            <person name="Lee S.-M."/>
            <person name="Levine A."/>
            <person name="Liu H."/>
            <person name="Masuda S."/>
            <person name="Mauel C."/>
            <person name="Medigue C."/>
            <person name="Medina N."/>
            <person name="Mellado R.P."/>
            <person name="Mizuno M."/>
            <person name="Moestl D."/>
            <person name="Nakai S."/>
            <person name="Noback M."/>
            <person name="Noone D."/>
            <person name="O'Reilly M."/>
            <person name="Ogawa K."/>
            <person name="Ogiwara A."/>
            <person name="Oudega B."/>
            <person name="Park S.-H."/>
            <person name="Parro V."/>
            <person name="Pohl T.M."/>
            <person name="Portetelle D."/>
            <person name="Porwollik S."/>
            <person name="Prescott A.M."/>
            <person name="Presecan E."/>
            <person name="Pujic P."/>
            <person name="Purnelle B."/>
            <person name="Rapoport G."/>
            <person name="Rey M."/>
            <person name="Reynolds S."/>
            <person name="Rieger M."/>
            <person name="Rivolta C."/>
            <person name="Rocha E."/>
            <person name="Roche B."/>
            <person name="Rose M."/>
            <person name="Sadaie Y."/>
            <person name="Sato T."/>
            <person name="Scanlan E."/>
            <person name="Schleich S."/>
            <person name="Schroeter R."/>
            <person name="Scoffone F."/>
            <person name="Sekiguchi J."/>
            <person name="Sekowska A."/>
            <person name="Seror S.J."/>
            <person name="Serror P."/>
            <person name="Shin B.-S."/>
            <person name="Soldo B."/>
            <person name="Sorokin A."/>
            <person name="Tacconi E."/>
            <person name="Takagi T."/>
            <person name="Takahashi H."/>
            <person name="Takemaru K."/>
            <person name="Takeuchi M."/>
            <person name="Tamakoshi A."/>
            <person name="Tanaka T."/>
            <person name="Terpstra P."/>
            <person name="Tognoni A."/>
            <person name="Tosato V."/>
            <person name="Uchiyama S."/>
            <person name="Vandenbol M."/>
            <person name="Vannier F."/>
            <person name="Vassarotti A."/>
            <person name="Viari A."/>
            <person name="Wambutt R."/>
            <person name="Wedler E."/>
            <person name="Wedler H."/>
            <person name="Weitzenegger T."/>
            <person name="Winters P."/>
            <person name="Wipat A."/>
            <person name="Yamamoto H."/>
            <person name="Yamane K."/>
            <person name="Yasumoto K."/>
            <person name="Yata K."/>
            <person name="Yoshida K."/>
            <person name="Yoshikawa H.-F."/>
            <person name="Zumstein E."/>
            <person name="Yoshikawa H."/>
            <person name="Danchin A."/>
        </authorList>
    </citation>
    <scope>NUCLEOTIDE SEQUENCE [LARGE SCALE GENOMIC DNA]</scope>
    <source>
        <strain>168</strain>
    </source>
</reference>
<reference key="3">
    <citation type="journal article" date="1994" name="Biochem. Biophys. Res. Commun.">
        <title>The Bacillus subtilis SRP54 homologue, Ffh, has an intrinsic GTPase activity and forms a ribonucleoprotein complex with small cytoplasmic RNA in vivo.</title>
        <authorList>
            <person name="Nakamura K."/>
            <person name="Nishiguchi M."/>
            <person name="Honda K."/>
            <person name="Yamane K."/>
        </authorList>
    </citation>
    <scope>FUNCTION</scope>
    <scope>CATALYTIC ACTIVITY</scope>
    <scope>INTERACTION WITH RNA</scope>
    <scope>SUBCELLULAR LOCATION</scope>
</reference>
<sequence length="446" mass="49541">MAFEGLADRLQQTISKIRGKGKVSEQDVKEMMREVRLALLEADVNFKVVKDFVKKVSERAVGQDVMKSLTPGQQVIKVVQEELTELMGGEESKIAVAKRPPTVIMMVGLQGAGKTTTSGKLANLLRKKHNRKPMLVAADIYRPAAIKQLETLGKQLDMPVFSLGDQVSPVEIAKQAIEKAKEEHYDYVILDTAGRLHIDHELMDELTNVKEIANPEEIFLVVDSMTGQDAVNVAKSFNEQLGLTGVVLTKLDGDTRGGAALSIRAVTNTPIKFAGLGEKLDALEPFHPERMASRILGMGDVLTLIEKAQASVDEDKAKELEQKMRTMSFTLDDFLEQLGQVRNMGPLDELLQMMPGAGKMKGLKNIQVDEKQLNHVEAIIKSMTVLEKEQPDIINASRRKRIAKGSGTSVQEVNRLLKQFDEMKKMMKQMTNMSKGKKKGFKLPFM</sequence>
<gene>
    <name evidence="1" type="primary">ffh</name>
    <name type="ordered locus">BSU15980</name>
</gene>